<proteinExistence type="inferred from homology"/>
<sequence length="78" mass="9091">MSRVCQVSGKRVQTGNNVSHANNRTRRRFLPNLHERRFWVASENRWVKLRVSAHALRTIDKNGIDAVLKELRARGEKV</sequence>
<reference key="1">
    <citation type="journal article" date="2005" name="J. Bacteriol.">
        <title>Insights into genome plasticity and pathogenicity of the plant pathogenic Bacterium Xanthomonas campestris pv. vesicatoria revealed by the complete genome sequence.</title>
        <authorList>
            <person name="Thieme F."/>
            <person name="Koebnik R."/>
            <person name="Bekel T."/>
            <person name="Berger C."/>
            <person name="Boch J."/>
            <person name="Buettner D."/>
            <person name="Caldana C."/>
            <person name="Gaigalat L."/>
            <person name="Goesmann A."/>
            <person name="Kay S."/>
            <person name="Kirchner O."/>
            <person name="Lanz C."/>
            <person name="Linke B."/>
            <person name="McHardy A.C."/>
            <person name="Meyer F."/>
            <person name="Mittenhuber G."/>
            <person name="Nies D.H."/>
            <person name="Niesbach-Kloesgen U."/>
            <person name="Patschkowski T."/>
            <person name="Rueckert C."/>
            <person name="Rupp O."/>
            <person name="Schneiker S."/>
            <person name="Schuster S.C."/>
            <person name="Vorhoelter F.J."/>
            <person name="Weber E."/>
            <person name="Puehler A."/>
            <person name="Bonas U."/>
            <person name="Bartels D."/>
            <person name="Kaiser O."/>
        </authorList>
    </citation>
    <scope>NUCLEOTIDE SEQUENCE [LARGE SCALE GENOMIC DNA]</scope>
    <source>
        <strain>85-10</strain>
    </source>
</reference>
<comment type="similarity">
    <text evidence="1">Belongs to the bacterial ribosomal protein bL28 family.</text>
</comment>
<accession>Q3BMM5</accession>
<gene>
    <name evidence="1" type="primary">rpmB</name>
    <name type="ordered locus">XCV4257</name>
</gene>
<name>RL28_XANE5</name>
<organism>
    <name type="scientific">Xanthomonas euvesicatoria pv. vesicatoria (strain 85-10)</name>
    <name type="common">Xanthomonas campestris pv. vesicatoria</name>
    <dbReference type="NCBI Taxonomy" id="316273"/>
    <lineage>
        <taxon>Bacteria</taxon>
        <taxon>Pseudomonadati</taxon>
        <taxon>Pseudomonadota</taxon>
        <taxon>Gammaproteobacteria</taxon>
        <taxon>Lysobacterales</taxon>
        <taxon>Lysobacteraceae</taxon>
        <taxon>Xanthomonas</taxon>
    </lineage>
</organism>
<evidence type="ECO:0000255" key="1">
    <source>
        <dbReference type="HAMAP-Rule" id="MF_00373"/>
    </source>
</evidence>
<evidence type="ECO:0000256" key="2">
    <source>
        <dbReference type="SAM" id="MobiDB-lite"/>
    </source>
</evidence>
<evidence type="ECO:0000305" key="3"/>
<dbReference type="EMBL" id="AM039952">
    <property type="protein sequence ID" value="CAJ25988.1"/>
    <property type="molecule type" value="Genomic_DNA"/>
</dbReference>
<dbReference type="RefSeq" id="WP_002809459.1">
    <property type="nucleotide sequence ID" value="NZ_CP017190.1"/>
</dbReference>
<dbReference type="SMR" id="Q3BMM5"/>
<dbReference type="STRING" id="456327.BJD11_24110"/>
<dbReference type="GeneID" id="97512304"/>
<dbReference type="KEGG" id="xcv:XCV4257"/>
<dbReference type="eggNOG" id="COG0227">
    <property type="taxonomic scope" value="Bacteria"/>
</dbReference>
<dbReference type="HOGENOM" id="CLU_064548_3_1_6"/>
<dbReference type="Proteomes" id="UP000007069">
    <property type="component" value="Chromosome"/>
</dbReference>
<dbReference type="GO" id="GO:0022625">
    <property type="term" value="C:cytosolic large ribosomal subunit"/>
    <property type="evidence" value="ECO:0007669"/>
    <property type="project" value="TreeGrafter"/>
</dbReference>
<dbReference type="GO" id="GO:0003735">
    <property type="term" value="F:structural constituent of ribosome"/>
    <property type="evidence" value="ECO:0007669"/>
    <property type="project" value="InterPro"/>
</dbReference>
<dbReference type="GO" id="GO:0006412">
    <property type="term" value="P:translation"/>
    <property type="evidence" value="ECO:0007669"/>
    <property type="project" value="UniProtKB-UniRule"/>
</dbReference>
<dbReference type="FunFam" id="2.30.170.40:FF:000001">
    <property type="entry name" value="50S ribosomal protein L28"/>
    <property type="match status" value="1"/>
</dbReference>
<dbReference type="Gene3D" id="2.30.170.40">
    <property type="entry name" value="Ribosomal protein L28/L24"/>
    <property type="match status" value="1"/>
</dbReference>
<dbReference type="HAMAP" id="MF_00373">
    <property type="entry name" value="Ribosomal_bL28"/>
    <property type="match status" value="1"/>
</dbReference>
<dbReference type="InterPro" id="IPR026569">
    <property type="entry name" value="Ribosomal_bL28"/>
</dbReference>
<dbReference type="InterPro" id="IPR034704">
    <property type="entry name" value="Ribosomal_bL28/bL31-like_sf"/>
</dbReference>
<dbReference type="InterPro" id="IPR001383">
    <property type="entry name" value="Ribosomal_bL28_bact-type"/>
</dbReference>
<dbReference type="InterPro" id="IPR037147">
    <property type="entry name" value="Ribosomal_bL28_sf"/>
</dbReference>
<dbReference type="NCBIfam" id="TIGR00009">
    <property type="entry name" value="L28"/>
    <property type="match status" value="1"/>
</dbReference>
<dbReference type="PANTHER" id="PTHR13528">
    <property type="entry name" value="39S RIBOSOMAL PROTEIN L28, MITOCHONDRIAL"/>
    <property type="match status" value="1"/>
</dbReference>
<dbReference type="PANTHER" id="PTHR13528:SF2">
    <property type="entry name" value="LARGE RIBOSOMAL SUBUNIT PROTEIN BL28M"/>
    <property type="match status" value="1"/>
</dbReference>
<dbReference type="Pfam" id="PF00830">
    <property type="entry name" value="Ribosomal_L28"/>
    <property type="match status" value="1"/>
</dbReference>
<dbReference type="SUPFAM" id="SSF143800">
    <property type="entry name" value="L28p-like"/>
    <property type="match status" value="1"/>
</dbReference>
<keyword id="KW-0687">Ribonucleoprotein</keyword>
<keyword id="KW-0689">Ribosomal protein</keyword>
<protein>
    <recommendedName>
        <fullName evidence="1">Large ribosomal subunit protein bL28</fullName>
    </recommendedName>
    <alternativeName>
        <fullName evidence="3">50S ribosomal protein L28</fullName>
    </alternativeName>
</protein>
<feature type="chain" id="PRO_1000007401" description="Large ribosomal subunit protein bL28">
    <location>
        <begin position="1"/>
        <end position="78"/>
    </location>
</feature>
<feature type="region of interest" description="Disordered" evidence="2">
    <location>
        <begin position="1"/>
        <end position="23"/>
    </location>
</feature>
<feature type="compositionally biased region" description="Polar residues" evidence="2">
    <location>
        <begin position="11"/>
        <end position="22"/>
    </location>
</feature>